<gene>
    <name evidence="1" type="primary">ung</name>
    <name type="ordered locus">E2348C_2857</name>
</gene>
<feature type="chain" id="PRO_1000199779" description="Uracil-DNA glycosylase">
    <location>
        <begin position="1"/>
        <end position="229"/>
    </location>
</feature>
<feature type="active site" description="Proton acceptor" evidence="1">
    <location>
        <position position="64"/>
    </location>
</feature>
<keyword id="KW-0963">Cytoplasm</keyword>
<keyword id="KW-0227">DNA damage</keyword>
<keyword id="KW-0234">DNA repair</keyword>
<keyword id="KW-0378">Hydrolase</keyword>
<keyword id="KW-1185">Reference proteome</keyword>
<dbReference type="EC" id="3.2.2.27" evidence="1"/>
<dbReference type="EMBL" id="FM180568">
    <property type="protein sequence ID" value="CAS10405.1"/>
    <property type="molecule type" value="Genomic_DNA"/>
</dbReference>
<dbReference type="RefSeq" id="WP_001262723.1">
    <property type="nucleotide sequence ID" value="NC_011601.1"/>
</dbReference>
<dbReference type="SMR" id="B7UH19"/>
<dbReference type="GeneID" id="75206274"/>
<dbReference type="KEGG" id="ecg:E2348C_2857"/>
<dbReference type="HOGENOM" id="CLU_032162_3_0_6"/>
<dbReference type="Proteomes" id="UP000008205">
    <property type="component" value="Chromosome"/>
</dbReference>
<dbReference type="GO" id="GO:0005737">
    <property type="term" value="C:cytoplasm"/>
    <property type="evidence" value="ECO:0007669"/>
    <property type="project" value="UniProtKB-SubCell"/>
</dbReference>
<dbReference type="GO" id="GO:0004844">
    <property type="term" value="F:uracil DNA N-glycosylase activity"/>
    <property type="evidence" value="ECO:0007669"/>
    <property type="project" value="UniProtKB-UniRule"/>
</dbReference>
<dbReference type="GO" id="GO:0097510">
    <property type="term" value="P:base-excision repair, AP site formation via deaminated base removal"/>
    <property type="evidence" value="ECO:0007669"/>
    <property type="project" value="TreeGrafter"/>
</dbReference>
<dbReference type="CDD" id="cd10027">
    <property type="entry name" value="UDG-F1-like"/>
    <property type="match status" value="1"/>
</dbReference>
<dbReference type="FunFam" id="3.40.470.10:FF:000001">
    <property type="entry name" value="Uracil-DNA glycosylase"/>
    <property type="match status" value="1"/>
</dbReference>
<dbReference type="Gene3D" id="3.40.470.10">
    <property type="entry name" value="Uracil-DNA glycosylase-like domain"/>
    <property type="match status" value="1"/>
</dbReference>
<dbReference type="HAMAP" id="MF_00148">
    <property type="entry name" value="UDG"/>
    <property type="match status" value="1"/>
</dbReference>
<dbReference type="InterPro" id="IPR002043">
    <property type="entry name" value="UDG_fam1"/>
</dbReference>
<dbReference type="InterPro" id="IPR018085">
    <property type="entry name" value="Ura-DNA_Glyclase_AS"/>
</dbReference>
<dbReference type="InterPro" id="IPR005122">
    <property type="entry name" value="Uracil-DNA_glycosylase-like"/>
</dbReference>
<dbReference type="InterPro" id="IPR036895">
    <property type="entry name" value="Uracil-DNA_glycosylase-like_sf"/>
</dbReference>
<dbReference type="NCBIfam" id="NF003588">
    <property type="entry name" value="PRK05254.1-1"/>
    <property type="match status" value="1"/>
</dbReference>
<dbReference type="NCBIfam" id="NF003589">
    <property type="entry name" value="PRK05254.1-2"/>
    <property type="match status" value="1"/>
</dbReference>
<dbReference type="NCBIfam" id="NF003591">
    <property type="entry name" value="PRK05254.1-4"/>
    <property type="match status" value="1"/>
</dbReference>
<dbReference type="NCBIfam" id="NF003592">
    <property type="entry name" value="PRK05254.1-5"/>
    <property type="match status" value="1"/>
</dbReference>
<dbReference type="NCBIfam" id="TIGR00628">
    <property type="entry name" value="ung"/>
    <property type="match status" value="1"/>
</dbReference>
<dbReference type="PANTHER" id="PTHR11264">
    <property type="entry name" value="URACIL-DNA GLYCOSYLASE"/>
    <property type="match status" value="1"/>
</dbReference>
<dbReference type="PANTHER" id="PTHR11264:SF0">
    <property type="entry name" value="URACIL-DNA GLYCOSYLASE"/>
    <property type="match status" value="1"/>
</dbReference>
<dbReference type="Pfam" id="PF03167">
    <property type="entry name" value="UDG"/>
    <property type="match status" value="1"/>
</dbReference>
<dbReference type="SMART" id="SM00986">
    <property type="entry name" value="UDG"/>
    <property type="match status" value="1"/>
</dbReference>
<dbReference type="SMART" id="SM00987">
    <property type="entry name" value="UreE_C"/>
    <property type="match status" value="1"/>
</dbReference>
<dbReference type="SUPFAM" id="SSF52141">
    <property type="entry name" value="Uracil-DNA glycosylase-like"/>
    <property type="match status" value="1"/>
</dbReference>
<dbReference type="PROSITE" id="PS00130">
    <property type="entry name" value="U_DNA_GLYCOSYLASE"/>
    <property type="match status" value="1"/>
</dbReference>
<sequence>MANELTWHDVLAEEKQQPYFLNTLQTVASERQSGVTIYPPQKDVFNAFRFTELGDVKVVILGQDPYHGPGQAHGLAFSVRPGIATPPSLLNMYKELENTIPGFTRPNHGYLESWARQGVLLLNTVLTVRAGQAHSHASLGWETFTDKVISLINQHREGVVFLLWGSHAQKKGAIIDKQRHHVLKAPHPSPLSAHRGFFGCNHFVLANQWLEQRGETPIDWMPVLPAESE</sequence>
<comment type="function">
    <text evidence="1">Excises uracil residues from the DNA which can arise as a result of misincorporation of dUMP residues by DNA polymerase or due to deamination of cytosine.</text>
</comment>
<comment type="catalytic activity">
    <reaction evidence="1">
        <text>Hydrolyzes single-stranded DNA or mismatched double-stranded DNA and polynucleotides, releasing free uracil.</text>
        <dbReference type="EC" id="3.2.2.27"/>
    </reaction>
</comment>
<comment type="subcellular location">
    <subcellularLocation>
        <location evidence="1">Cytoplasm</location>
    </subcellularLocation>
</comment>
<comment type="similarity">
    <text evidence="1">Belongs to the uracil-DNA glycosylase (UDG) superfamily. UNG family.</text>
</comment>
<name>UNG_ECO27</name>
<protein>
    <recommendedName>
        <fullName evidence="1">Uracil-DNA glycosylase</fullName>
        <shortName evidence="1">UDG</shortName>
        <ecNumber evidence="1">3.2.2.27</ecNumber>
    </recommendedName>
</protein>
<accession>B7UH19</accession>
<proteinExistence type="inferred from homology"/>
<reference key="1">
    <citation type="journal article" date="2009" name="J. Bacteriol.">
        <title>Complete genome sequence and comparative genome analysis of enteropathogenic Escherichia coli O127:H6 strain E2348/69.</title>
        <authorList>
            <person name="Iguchi A."/>
            <person name="Thomson N.R."/>
            <person name="Ogura Y."/>
            <person name="Saunders D."/>
            <person name="Ooka T."/>
            <person name="Henderson I.R."/>
            <person name="Harris D."/>
            <person name="Asadulghani M."/>
            <person name="Kurokawa K."/>
            <person name="Dean P."/>
            <person name="Kenny B."/>
            <person name="Quail M.A."/>
            <person name="Thurston S."/>
            <person name="Dougan G."/>
            <person name="Hayashi T."/>
            <person name="Parkhill J."/>
            <person name="Frankel G."/>
        </authorList>
    </citation>
    <scope>NUCLEOTIDE SEQUENCE [LARGE SCALE GENOMIC DNA]</scope>
    <source>
        <strain>E2348/69 / EPEC</strain>
    </source>
</reference>
<evidence type="ECO:0000255" key="1">
    <source>
        <dbReference type="HAMAP-Rule" id="MF_00148"/>
    </source>
</evidence>
<organism>
    <name type="scientific">Escherichia coli O127:H6 (strain E2348/69 / EPEC)</name>
    <dbReference type="NCBI Taxonomy" id="574521"/>
    <lineage>
        <taxon>Bacteria</taxon>
        <taxon>Pseudomonadati</taxon>
        <taxon>Pseudomonadota</taxon>
        <taxon>Gammaproteobacteria</taxon>
        <taxon>Enterobacterales</taxon>
        <taxon>Enterobacteriaceae</taxon>
        <taxon>Escherichia</taxon>
    </lineage>
</organism>